<sequence length="255" mass="28462">MQFDIVTLFPDMFRALTDWGITSRAAKQERYGLRTWNPRDFTTDNYRTIDDRPYGGGPGMVMLARPLEDAINAAKAAQAEQGIGGARVVMMSPQGATLNHDKVMRFAAEPGLILLCGRYEAIDQRLIDRVVDEEVSLGDFVLSGGELPAMALIDAVVRHLPGVLNDAQSAVQDSFVDGLLDCPHYTRPEEYDGVRVPDVLLGGHHAEIEQWRRREALRNTWLKRPDLIVQARKNKLLSRADEAWLASLAKDASKH</sequence>
<protein>
    <recommendedName>
        <fullName evidence="1">tRNA (guanine-N(1)-)-methyltransferase</fullName>
        <ecNumber evidence="1">2.1.1.228</ecNumber>
    </recommendedName>
    <alternativeName>
        <fullName evidence="1">M1G-methyltransferase</fullName>
    </alternativeName>
    <alternativeName>
        <fullName evidence="1">tRNA [GM37] methyltransferase</fullName>
    </alternativeName>
</protein>
<proteinExistence type="evidence at protein level"/>
<feature type="chain" id="PRO_1000130145" description="tRNA (guanine-N(1)-)-methyltransferase">
    <location>
        <begin position="1"/>
        <end position="255"/>
    </location>
</feature>
<feature type="binding site" evidence="1">
    <location>
        <position position="117"/>
    </location>
    <ligand>
        <name>S-adenosyl-L-methionine</name>
        <dbReference type="ChEBI" id="CHEBI:59789"/>
    </ligand>
</feature>
<feature type="binding site" evidence="1">
    <location>
        <begin position="137"/>
        <end position="142"/>
    </location>
    <ligand>
        <name>S-adenosyl-L-methionine</name>
        <dbReference type="ChEBI" id="CHEBI:59789"/>
    </ligand>
</feature>
<feature type="strand" evidence="2">
    <location>
        <begin position="1"/>
        <end position="6"/>
    </location>
</feature>
<feature type="helix" evidence="2">
    <location>
        <begin position="10"/>
        <end position="13"/>
    </location>
</feature>
<feature type="helix" evidence="2">
    <location>
        <begin position="14"/>
        <end position="17"/>
    </location>
</feature>
<feature type="helix" evidence="2">
    <location>
        <begin position="20"/>
        <end position="27"/>
    </location>
</feature>
<feature type="strand" evidence="2">
    <location>
        <begin position="30"/>
        <end position="36"/>
    </location>
</feature>
<feature type="helix" evidence="2">
    <location>
        <begin position="38"/>
        <end position="41"/>
    </location>
</feature>
<feature type="helix" evidence="2">
    <location>
        <begin position="64"/>
        <end position="80"/>
    </location>
</feature>
<feature type="strand" evidence="2">
    <location>
        <begin position="87"/>
        <end position="91"/>
    </location>
</feature>
<feature type="strand" evidence="2">
    <location>
        <begin position="95"/>
        <end position="97"/>
    </location>
</feature>
<feature type="helix" evidence="2">
    <location>
        <begin position="100"/>
        <end position="107"/>
    </location>
</feature>
<feature type="strand" evidence="2">
    <location>
        <begin position="109"/>
        <end position="115"/>
    </location>
</feature>
<feature type="strand" evidence="2">
    <location>
        <begin position="119"/>
        <end position="122"/>
    </location>
</feature>
<feature type="helix" evidence="2">
    <location>
        <begin position="124"/>
        <end position="130"/>
    </location>
</feature>
<feature type="strand" evidence="2">
    <location>
        <begin position="133"/>
        <end position="140"/>
    </location>
</feature>
<feature type="helix" evidence="2">
    <location>
        <begin position="146"/>
        <end position="158"/>
    </location>
</feature>
<feature type="helix" evidence="2">
    <location>
        <begin position="166"/>
        <end position="170"/>
    </location>
</feature>
<feature type="turn" evidence="2">
    <location>
        <begin position="174"/>
        <end position="177"/>
    </location>
</feature>
<feature type="strand" evidence="2">
    <location>
        <begin position="189"/>
        <end position="191"/>
    </location>
</feature>
<feature type="helix" evidence="2">
    <location>
        <begin position="198"/>
        <end position="201"/>
    </location>
</feature>
<feature type="helix" evidence="2">
    <location>
        <begin position="205"/>
        <end position="223"/>
    </location>
</feature>
<feature type="helix" evidence="2">
    <location>
        <begin position="225"/>
        <end position="233"/>
    </location>
</feature>
<feature type="helix" evidence="2">
    <location>
        <begin position="239"/>
        <end position="253"/>
    </location>
</feature>
<organism>
    <name type="scientific">Paraburkholderia phymatum (strain DSM 17167 / CIP 108236 / LMG 21445 / STM815)</name>
    <name type="common">Burkholderia phymatum</name>
    <dbReference type="NCBI Taxonomy" id="391038"/>
    <lineage>
        <taxon>Bacteria</taxon>
        <taxon>Pseudomonadati</taxon>
        <taxon>Pseudomonadota</taxon>
        <taxon>Betaproteobacteria</taxon>
        <taxon>Burkholderiales</taxon>
        <taxon>Burkholderiaceae</taxon>
        <taxon>Paraburkholderia</taxon>
    </lineage>
</organism>
<accession>B2JF31</accession>
<keyword id="KW-0002">3D-structure</keyword>
<keyword id="KW-0963">Cytoplasm</keyword>
<keyword id="KW-0489">Methyltransferase</keyword>
<keyword id="KW-1185">Reference proteome</keyword>
<keyword id="KW-0949">S-adenosyl-L-methionine</keyword>
<keyword id="KW-0808">Transferase</keyword>
<keyword id="KW-0819">tRNA processing</keyword>
<reference key="1">
    <citation type="journal article" date="2014" name="Stand. Genomic Sci.">
        <title>Complete genome sequence of Burkholderia phymatum STM815(T), a broad host range and efficient nitrogen-fixing symbiont of Mimosa species.</title>
        <authorList>
            <person name="Moulin L."/>
            <person name="Klonowska A."/>
            <person name="Caroline B."/>
            <person name="Booth K."/>
            <person name="Vriezen J.A."/>
            <person name="Melkonian R."/>
            <person name="James E.K."/>
            <person name="Young J.P."/>
            <person name="Bena G."/>
            <person name="Hauser L."/>
            <person name="Land M."/>
            <person name="Kyrpides N."/>
            <person name="Bruce D."/>
            <person name="Chain P."/>
            <person name="Copeland A."/>
            <person name="Pitluck S."/>
            <person name="Woyke T."/>
            <person name="Lizotte-Waniewski M."/>
            <person name="Bristow J."/>
            <person name="Riley M."/>
        </authorList>
    </citation>
    <scope>NUCLEOTIDE SEQUENCE [LARGE SCALE GENOMIC DNA]</scope>
    <source>
        <strain>DSM 17167 / CIP 108236 / LMG 21445 / STM815</strain>
    </source>
</reference>
<comment type="function">
    <text evidence="1">Specifically methylates guanosine-37 in various tRNAs.</text>
</comment>
<comment type="catalytic activity">
    <reaction evidence="1">
        <text>guanosine(37) in tRNA + S-adenosyl-L-methionine = N(1)-methylguanosine(37) in tRNA + S-adenosyl-L-homocysteine + H(+)</text>
        <dbReference type="Rhea" id="RHEA:36899"/>
        <dbReference type="Rhea" id="RHEA-COMP:10145"/>
        <dbReference type="Rhea" id="RHEA-COMP:10147"/>
        <dbReference type="ChEBI" id="CHEBI:15378"/>
        <dbReference type="ChEBI" id="CHEBI:57856"/>
        <dbReference type="ChEBI" id="CHEBI:59789"/>
        <dbReference type="ChEBI" id="CHEBI:73542"/>
        <dbReference type="ChEBI" id="CHEBI:74269"/>
        <dbReference type="EC" id="2.1.1.228"/>
    </reaction>
</comment>
<comment type="subunit">
    <text evidence="1">Homodimer.</text>
</comment>
<comment type="subcellular location">
    <subcellularLocation>
        <location evidence="1">Cytoplasm</location>
    </subcellularLocation>
</comment>
<comment type="similarity">
    <text evidence="1">Belongs to the RNA methyltransferase TrmD family.</text>
</comment>
<evidence type="ECO:0000255" key="1">
    <source>
        <dbReference type="HAMAP-Rule" id="MF_00605"/>
    </source>
</evidence>
<evidence type="ECO:0007829" key="2">
    <source>
        <dbReference type="PDB" id="4H3Z"/>
    </source>
</evidence>
<name>TRMD_PARP8</name>
<dbReference type="EC" id="2.1.1.228" evidence="1"/>
<dbReference type="EMBL" id="CP001043">
    <property type="protein sequence ID" value="ACC69960.1"/>
    <property type="molecule type" value="Genomic_DNA"/>
</dbReference>
<dbReference type="RefSeq" id="WP_012400180.1">
    <property type="nucleotide sequence ID" value="NC_010622.1"/>
</dbReference>
<dbReference type="PDB" id="4H3Y">
    <property type="method" value="X-ray"/>
    <property type="resolution" value="2.50 A"/>
    <property type="chains" value="A/B=1-255"/>
</dbReference>
<dbReference type="PDB" id="4H3Z">
    <property type="method" value="X-ray"/>
    <property type="resolution" value="2.15 A"/>
    <property type="chains" value="A/B=1-255"/>
</dbReference>
<dbReference type="PDBsum" id="4H3Y"/>
<dbReference type="PDBsum" id="4H3Z"/>
<dbReference type="SMR" id="B2JF31"/>
<dbReference type="STRING" id="391038.Bphy_0771"/>
<dbReference type="KEGG" id="bph:Bphy_0771"/>
<dbReference type="eggNOG" id="COG0336">
    <property type="taxonomic scope" value="Bacteria"/>
</dbReference>
<dbReference type="HOGENOM" id="CLU_047363_0_2_4"/>
<dbReference type="OrthoDB" id="9807416at2"/>
<dbReference type="EvolutionaryTrace" id="B2JF31"/>
<dbReference type="Proteomes" id="UP000001192">
    <property type="component" value="Chromosome 1"/>
</dbReference>
<dbReference type="GO" id="GO:0005829">
    <property type="term" value="C:cytosol"/>
    <property type="evidence" value="ECO:0007669"/>
    <property type="project" value="TreeGrafter"/>
</dbReference>
<dbReference type="GO" id="GO:0052906">
    <property type="term" value="F:tRNA (guanine(37)-N1)-methyltransferase activity"/>
    <property type="evidence" value="ECO:0007669"/>
    <property type="project" value="UniProtKB-UniRule"/>
</dbReference>
<dbReference type="GO" id="GO:0002939">
    <property type="term" value="P:tRNA N1-guanine methylation"/>
    <property type="evidence" value="ECO:0007669"/>
    <property type="project" value="TreeGrafter"/>
</dbReference>
<dbReference type="CDD" id="cd18080">
    <property type="entry name" value="TrmD-like"/>
    <property type="match status" value="1"/>
</dbReference>
<dbReference type="FunFam" id="1.10.1270.20:FF:000001">
    <property type="entry name" value="tRNA (guanine-N(1)-)-methyltransferase"/>
    <property type="match status" value="1"/>
</dbReference>
<dbReference type="FunFam" id="3.40.1280.10:FF:000001">
    <property type="entry name" value="tRNA (guanine-N(1)-)-methyltransferase"/>
    <property type="match status" value="1"/>
</dbReference>
<dbReference type="Gene3D" id="3.40.1280.10">
    <property type="match status" value="1"/>
</dbReference>
<dbReference type="Gene3D" id="1.10.1270.20">
    <property type="entry name" value="tRNA(m1g37)methyltransferase, domain 2"/>
    <property type="match status" value="1"/>
</dbReference>
<dbReference type="HAMAP" id="MF_00605">
    <property type="entry name" value="TrmD"/>
    <property type="match status" value="1"/>
</dbReference>
<dbReference type="InterPro" id="IPR029028">
    <property type="entry name" value="Alpha/beta_knot_MTases"/>
</dbReference>
<dbReference type="InterPro" id="IPR023148">
    <property type="entry name" value="tRNA_m1G_MeTrfase_C_sf"/>
</dbReference>
<dbReference type="InterPro" id="IPR002649">
    <property type="entry name" value="tRNA_m1G_MeTrfase_TrmD"/>
</dbReference>
<dbReference type="InterPro" id="IPR029026">
    <property type="entry name" value="tRNA_m1G_MTases_N"/>
</dbReference>
<dbReference type="InterPro" id="IPR016009">
    <property type="entry name" value="tRNA_MeTrfase_TRMD/TRM10"/>
</dbReference>
<dbReference type="NCBIfam" id="NF000648">
    <property type="entry name" value="PRK00026.1"/>
    <property type="match status" value="1"/>
</dbReference>
<dbReference type="NCBIfam" id="TIGR00088">
    <property type="entry name" value="trmD"/>
    <property type="match status" value="1"/>
</dbReference>
<dbReference type="PANTHER" id="PTHR46417">
    <property type="entry name" value="TRNA (GUANINE-N(1)-)-METHYLTRANSFERASE"/>
    <property type="match status" value="1"/>
</dbReference>
<dbReference type="PANTHER" id="PTHR46417:SF1">
    <property type="entry name" value="TRNA (GUANINE-N(1)-)-METHYLTRANSFERASE"/>
    <property type="match status" value="1"/>
</dbReference>
<dbReference type="Pfam" id="PF01746">
    <property type="entry name" value="tRNA_m1G_MT"/>
    <property type="match status" value="1"/>
</dbReference>
<dbReference type="PIRSF" id="PIRSF000386">
    <property type="entry name" value="tRNA_mtase"/>
    <property type="match status" value="1"/>
</dbReference>
<dbReference type="SUPFAM" id="SSF75217">
    <property type="entry name" value="alpha/beta knot"/>
    <property type="match status" value="1"/>
</dbReference>
<gene>
    <name evidence="1" type="primary">trmD</name>
    <name type="ordered locus">Bphy_0771</name>
</gene>